<reference key="1">
    <citation type="journal article" date="1997" name="Science">
        <title>The complete genome sequence of Escherichia coli K-12.</title>
        <authorList>
            <person name="Blattner F.R."/>
            <person name="Plunkett G. III"/>
            <person name="Bloch C.A."/>
            <person name="Perna N.T."/>
            <person name="Burland V."/>
            <person name="Riley M."/>
            <person name="Collado-Vides J."/>
            <person name="Glasner J.D."/>
            <person name="Rode C.K."/>
            <person name="Mayhew G.F."/>
            <person name="Gregor J."/>
            <person name="Davis N.W."/>
            <person name="Kirkpatrick H.A."/>
            <person name="Goeden M.A."/>
            <person name="Rose D.J."/>
            <person name="Mau B."/>
            <person name="Shao Y."/>
        </authorList>
    </citation>
    <scope>NUCLEOTIDE SEQUENCE [LARGE SCALE GENOMIC DNA]</scope>
    <source>
        <strain>K12 / MG1655 / ATCC 47076</strain>
    </source>
</reference>
<reference key="2">
    <citation type="journal article" date="2006" name="Mol. Syst. Biol.">
        <title>Highly accurate genome sequences of Escherichia coli K-12 strains MG1655 and W3110.</title>
        <authorList>
            <person name="Hayashi K."/>
            <person name="Morooka N."/>
            <person name="Yamamoto Y."/>
            <person name="Fujita K."/>
            <person name="Isono K."/>
            <person name="Choi S."/>
            <person name="Ohtsubo E."/>
            <person name="Baba T."/>
            <person name="Wanner B.L."/>
            <person name="Mori H."/>
            <person name="Horiuchi T."/>
        </authorList>
    </citation>
    <scope>NUCLEOTIDE SEQUENCE [LARGE SCALE GENOMIC DNA]</scope>
    <source>
        <strain>K12 / W3110 / ATCC 27325 / DSM 5911</strain>
    </source>
</reference>
<reference key="3">
    <citation type="journal article" date="2005" name="Science">
        <title>Global topology analysis of the Escherichia coli inner membrane proteome.</title>
        <authorList>
            <person name="Daley D.O."/>
            <person name="Rapp M."/>
            <person name="Granseth E."/>
            <person name="Melen K."/>
            <person name="Drew D."/>
            <person name="von Heijne G."/>
        </authorList>
    </citation>
    <scope>TOPOLOGY [LARGE SCALE ANALYSIS]</scope>
    <source>
        <strain>K12 / MG1655 / ATCC 47076</strain>
    </source>
</reference>
<proteinExistence type="evidence at protein level"/>
<sequence>MTKVLLSHPPRPASHNSSRAMVWVRKNLFSSWSNSLLTIGCIWLMWELIPPLLNWAFLQANWVGSTRADCTKAGACWVFIHERFGQFMYGLYPHDQRWRINLALLIGLVSIAPMFWKILPHRGRYIAAWAVIYPLIVWWLMYGGFFALERVETRQWGGLTLTLIIASVGIAGALPWGILLALGRRSHMPIVRILSVIFIEFWRGVPLITVLFMSSVMLPLFMAEGTSIDKLIRALVGVILFQSAYVAEVVRGGLQALPKGQYEAAESLALGYWKTQGLVILPQALKLVIPGLVNTIIALFKDTSLVIIIGLFDLFSSVQQATVDPAWLGMSTEGYVFAALIYWIFCFSMSRYSQYLEKRFNTGRTPH</sequence>
<comment type="function">
    <text>Probably part of the binding-protein-dependent transport system YdhWXYZ for an amino acid; probably responsible for the translocation of the substrate across the membrane.</text>
</comment>
<comment type="subcellular location">
    <subcellularLocation>
        <location>Cell inner membrane</location>
        <topology>Multi-pass membrane protein</topology>
    </subcellularLocation>
</comment>
<comment type="similarity">
    <text evidence="3">Belongs to the binding-protein-dependent transport system permease family. HisMQ subfamily.</text>
</comment>
<comment type="sequence caution" evidence="3">
    <conflict type="erroneous initiation">
        <sequence resource="EMBL-CDS" id="AAA58074"/>
    </conflict>
    <text>Extended N-terminus.</text>
</comment>
<organism>
    <name type="scientific">Escherichia coli (strain K12)</name>
    <dbReference type="NCBI Taxonomy" id="83333"/>
    <lineage>
        <taxon>Bacteria</taxon>
        <taxon>Pseudomonadati</taxon>
        <taxon>Pseudomonadota</taxon>
        <taxon>Gammaproteobacteria</taxon>
        <taxon>Enterobacterales</taxon>
        <taxon>Enterobacteriaceae</taxon>
        <taxon>Escherichia</taxon>
    </lineage>
</organism>
<gene>
    <name type="primary">yhdY</name>
    <name type="ordered locus">b3270</name>
    <name type="ordered locus">JW5545</name>
</gene>
<protein>
    <recommendedName>
        <fullName>Inner membrane amino-acid ABC transporter permease protein YhdY</fullName>
    </recommendedName>
</protein>
<name>YHDY_ECOLI</name>
<accession>P45768</accession>
<accession>Q2M8U5</accession>
<dbReference type="EMBL" id="U18997">
    <property type="protein sequence ID" value="AAA58074.1"/>
    <property type="status" value="ALT_INIT"/>
    <property type="molecule type" value="Genomic_DNA"/>
</dbReference>
<dbReference type="EMBL" id="U00096">
    <property type="protein sequence ID" value="AAC76302.2"/>
    <property type="molecule type" value="Genomic_DNA"/>
</dbReference>
<dbReference type="EMBL" id="AP009048">
    <property type="protein sequence ID" value="BAE77311.1"/>
    <property type="molecule type" value="Genomic_DNA"/>
</dbReference>
<dbReference type="PIR" id="H65119">
    <property type="entry name" value="H65119"/>
</dbReference>
<dbReference type="RefSeq" id="NP_417736.2">
    <property type="nucleotide sequence ID" value="NC_000913.3"/>
</dbReference>
<dbReference type="RefSeq" id="WP_001300681.1">
    <property type="nucleotide sequence ID" value="NZ_SSZK01000072.1"/>
</dbReference>
<dbReference type="SMR" id="P45768"/>
<dbReference type="BioGRID" id="4261009">
    <property type="interactions" value="8"/>
</dbReference>
<dbReference type="BioGRID" id="852076">
    <property type="interactions" value="2"/>
</dbReference>
<dbReference type="ComplexPortal" id="CPX-4450">
    <property type="entry name" value="Putative amino acid ABC transporter complex"/>
</dbReference>
<dbReference type="DIP" id="DIP-12306N"/>
<dbReference type="FunCoup" id="P45768">
    <property type="interactions" value="200"/>
</dbReference>
<dbReference type="IntAct" id="P45768">
    <property type="interactions" value="3"/>
</dbReference>
<dbReference type="STRING" id="511145.b3270"/>
<dbReference type="TCDB" id="3.A.1.3.26">
    <property type="family name" value="the atp-binding cassette (abc) superfamily"/>
</dbReference>
<dbReference type="PaxDb" id="511145-b3270"/>
<dbReference type="EnsemblBacteria" id="AAC76302">
    <property type="protein sequence ID" value="AAC76302"/>
    <property type="gene ID" value="b3270"/>
</dbReference>
<dbReference type="GeneID" id="947764"/>
<dbReference type="KEGG" id="ecj:JW5545"/>
<dbReference type="KEGG" id="eco:b3270"/>
<dbReference type="KEGG" id="ecoc:C3026_17790"/>
<dbReference type="PATRIC" id="fig|511145.12.peg.3370"/>
<dbReference type="EchoBASE" id="EB2685"/>
<dbReference type="eggNOG" id="COG0765">
    <property type="taxonomic scope" value="Bacteria"/>
</dbReference>
<dbReference type="HOGENOM" id="CLU_019602_16_1_6"/>
<dbReference type="InParanoid" id="P45768"/>
<dbReference type="OMA" id="ACWVFIQ"/>
<dbReference type="OrthoDB" id="9771188at2"/>
<dbReference type="PhylomeDB" id="P45768"/>
<dbReference type="BioCyc" id="EcoCyc:YHDY-MONOMER"/>
<dbReference type="PRO" id="PR:P45768"/>
<dbReference type="Proteomes" id="UP000000625">
    <property type="component" value="Chromosome"/>
</dbReference>
<dbReference type="GO" id="GO:0055052">
    <property type="term" value="C:ATP-binding cassette (ABC) transporter complex, substrate-binding subunit-containing"/>
    <property type="evidence" value="ECO:0000303"/>
    <property type="project" value="ComplexPortal"/>
</dbReference>
<dbReference type="GO" id="GO:0016020">
    <property type="term" value="C:membrane"/>
    <property type="evidence" value="ECO:0000303"/>
    <property type="project" value="ComplexPortal"/>
</dbReference>
<dbReference type="GO" id="GO:0005886">
    <property type="term" value="C:plasma membrane"/>
    <property type="evidence" value="ECO:0000314"/>
    <property type="project" value="EcoCyc"/>
</dbReference>
<dbReference type="GO" id="GO:0022857">
    <property type="term" value="F:transmembrane transporter activity"/>
    <property type="evidence" value="ECO:0007669"/>
    <property type="project" value="InterPro"/>
</dbReference>
<dbReference type="GO" id="GO:0006865">
    <property type="term" value="P:amino acid transport"/>
    <property type="evidence" value="ECO:0000318"/>
    <property type="project" value="GO_Central"/>
</dbReference>
<dbReference type="GO" id="GO:0015833">
    <property type="term" value="P:peptide transport"/>
    <property type="evidence" value="ECO:0000303"/>
    <property type="project" value="ComplexPortal"/>
</dbReference>
<dbReference type="CDD" id="cd06261">
    <property type="entry name" value="TM_PBP2"/>
    <property type="match status" value="1"/>
</dbReference>
<dbReference type="FunFam" id="1.10.3720.10:FF:000032">
    <property type="entry name" value="General amino acid ABC transporter permease"/>
    <property type="match status" value="1"/>
</dbReference>
<dbReference type="Gene3D" id="1.10.3720.10">
    <property type="entry name" value="MetI-like"/>
    <property type="match status" value="1"/>
</dbReference>
<dbReference type="InterPro" id="IPR010065">
    <property type="entry name" value="AA_ABC_transptr_permease_3TM"/>
</dbReference>
<dbReference type="InterPro" id="IPR043429">
    <property type="entry name" value="ArtM/GltK/GlnP/TcyL/YhdX-like"/>
</dbReference>
<dbReference type="InterPro" id="IPR000515">
    <property type="entry name" value="MetI-like"/>
</dbReference>
<dbReference type="InterPro" id="IPR035906">
    <property type="entry name" value="MetI-like_sf"/>
</dbReference>
<dbReference type="NCBIfam" id="TIGR01726">
    <property type="entry name" value="HEQRo_perm_3TM"/>
    <property type="match status" value="1"/>
</dbReference>
<dbReference type="PANTHER" id="PTHR30614:SF41">
    <property type="entry name" value="INNER MEMBRANE AMINO-ACID ABC TRANSPORTER PERMEASE PROTEIN YHDY"/>
    <property type="match status" value="1"/>
</dbReference>
<dbReference type="PANTHER" id="PTHR30614">
    <property type="entry name" value="MEMBRANE COMPONENT OF AMINO ACID ABC TRANSPORTER"/>
    <property type="match status" value="1"/>
</dbReference>
<dbReference type="Pfam" id="PF00528">
    <property type="entry name" value="BPD_transp_1"/>
    <property type="match status" value="1"/>
</dbReference>
<dbReference type="SUPFAM" id="SSF161098">
    <property type="entry name" value="MetI-like"/>
    <property type="match status" value="1"/>
</dbReference>
<dbReference type="PROSITE" id="PS50928">
    <property type="entry name" value="ABC_TM1"/>
    <property type="match status" value="1"/>
</dbReference>
<evidence type="ECO:0000255" key="1"/>
<evidence type="ECO:0000255" key="2">
    <source>
        <dbReference type="PROSITE-ProRule" id="PRU00441"/>
    </source>
</evidence>
<evidence type="ECO:0000305" key="3"/>
<feature type="chain" id="PRO_0000060254" description="Inner membrane amino-acid ABC transporter permease protein YhdY">
    <location>
        <begin position="1"/>
        <end position="367"/>
    </location>
</feature>
<feature type="topological domain" description="Cytoplasmic" evidence="1">
    <location>
        <begin position="1"/>
        <end position="36"/>
    </location>
</feature>
<feature type="transmembrane region" description="Helical" evidence="2">
    <location>
        <begin position="37"/>
        <end position="57"/>
    </location>
</feature>
<feature type="topological domain" description="Periplasmic" evidence="1">
    <location>
        <begin position="58"/>
        <end position="99"/>
    </location>
</feature>
<feature type="transmembrane region" description="Helical" evidence="2">
    <location>
        <begin position="100"/>
        <end position="120"/>
    </location>
</feature>
<feature type="topological domain" description="Cytoplasmic" evidence="1">
    <location>
        <begin position="121"/>
        <end position="125"/>
    </location>
</feature>
<feature type="transmembrane region" description="Helical" evidence="2">
    <location>
        <begin position="126"/>
        <end position="146"/>
    </location>
</feature>
<feature type="topological domain" description="Periplasmic" evidence="1">
    <location>
        <begin position="147"/>
        <end position="162"/>
    </location>
</feature>
<feature type="transmembrane region" description="Helical" evidence="2">
    <location>
        <begin position="163"/>
        <end position="183"/>
    </location>
</feature>
<feature type="topological domain" description="Cytoplasmic" evidence="1">
    <location>
        <begin position="184"/>
        <end position="192"/>
    </location>
</feature>
<feature type="transmembrane region" description="Helical" evidence="2">
    <location>
        <begin position="193"/>
        <end position="213"/>
    </location>
</feature>
<feature type="topological domain" description="Periplasmic" evidence="1">
    <location>
        <begin position="214"/>
        <end position="233"/>
    </location>
</feature>
<feature type="transmembrane region" description="Helical" evidence="2">
    <location>
        <begin position="234"/>
        <end position="254"/>
    </location>
</feature>
<feature type="topological domain" description="Cytoplasmic" evidence="1">
    <location>
        <begin position="255"/>
        <end position="291"/>
    </location>
</feature>
<feature type="transmembrane region" description="Helical" evidence="2">
    <location>
        <begin position="292"/>
        <end position="312"/>
    </location>
</feature>
<feature type="topological domain" description="Periplasmic" evidence="1">
    <location>
        <begin position="313"/>
        <end position="326"/>
    </location>
</feature>
<feature type="transmembrane region" description="Helical" evidence="2">
    <location>
        <begin position="327"/>
        <end position="347"/>
    </location>
</feature>
<feature type="topological domain" description="Cytoplasmic" evidence="1">
    <location>
        <begin position="348"/>
        <end position="367"/>
    </location>
</feature>
<feature type="domain" description="ABC transmembrane type-1" evidence="2">
    <location>
        <begin position="159"/>
        <end position="353"/>
    </location>
</feature>
<keyword id="KW-0029">Amino-acid transport</keyword>
<keyword id="KW-0997">Cell inner membrane</keyword>
<keyword id="KW-1003">Cell membrane</keyword>
<keyword id="KW-0472">Membrane</keyword>
<keyword id="KW-1185">Reference proteome</keyword>
<keyword id="KW-0812">Transmembrane</keyword>
<keyword id="KW-1133">Transmembrane helix</keyword>
<keyword id="KW-0813">Transport</keyword>